<name>ZDHC8_MOUSE</name>
<feature type="chain" id="PRO_0000212878" description="Palmitoyltransferase ZDHHC8">
    <location>
        <begin position="1"/>
        <end position="762"/>
    </location>
</feature>
<feature type="topological domain" description="Cytoplasmic" evidence="3">
    <location>
        <begin position="1"/>
        <end position="13"/>
    </location>
</feature>
<feature type="transmembrane region" description="Helical" evidence="3">
    <location>
        <begin position="14"/>
        <end position="34"/>
    </location>
</feature>
<feature type="topological domain" description="Lumenal" evidence="3">
    <location>
        <begin position="35"/>
        <end position="52"/>
    </location>
</feature>
<feature type="transmembrane region" description="Helical" evidence="3">
    <location>
        <begin position="53"/>
        <end position="73"/>
    </location>
</feature>
<feature type="topological domain" description="Cytoplasmic" evidence="3">
    <location>
        <begin position="74"/>
        <end position="148"/>
    </location>
</feature>
<feature type="transmembrane region" description="Helical" evidence="3">
    <location>
        <begin position="149"/>
        <end position="169"/>
    </location>
</feature>
<feature type="topological domain" description="Lumenal" evidence="3">
    <location>
        <begin position="170"/>
        <end position="190"/>
    </location>
</feature>
<feature type="transmembrane region" description="Helical" evidence="3">
    <location>
        <begin position="191"/>
        <end position="211"/>
    </location>
</feature>
<feature type="topological domain" description="Cytoplasmic" evidence="3">
    <location>
        <begin position="212"/>
        <end position="762"/>
    </location>
</feature>
<feature type="domain" description="DHHC" evidence="4">
    <location>
        <begin position="104"/>
        <end position="154"/>
    </location>
</feature>
<feature type="region of interest" description="Disordered" evidence="5">
    <location>
        <begin position="289"/>
        <end position="350"/>
    </location>
</feature>
<feature type="region of interest" description="Disordered" evidence="5">
    <location>
        <begin position="362"/>
        <end position="423"/>
    </location>
</feature>
<feature type="region of interest" description="Disordered" evidence="5">
    <location>
        <begin position="436"/>
        <end position="537"/>
    </location>
</feature>
<feature type="region of interest" description="Disordered" evidence="5">
    <location>
        <begin position="551"/>
        <end position="574"/>
    </location>
</feature>
<feature type="region of interest" description="Disordered" evidence="5">
    <location>
        <begin position="626"/>
        <end position="684"/>
    </location>
</feature>
<feature type="region of interest" description="Disordered" evidence="5">
    <location>
        <begin position="707"/>
        <end position="744"/>
    </location>
</feature>
<feature type="compositionally biased region" description="Pro residues" evidence="5">
    <location>
        <begin position="408"/>
        <end position="417"/>
    </location>
</feature>
<feature type="compositionally biased region" description="Polar residues" evidence="5">
    <location>
        <begin position="471"/>
        <end position="485"/>
    </location>
</feature>
<feature type="compositionally biased region" description="Pro residues" evidence="5">
    <location>
        <begin position="511"/>
        <end position="521"/>
    </location>
</feature>
<feature type="compositionally biased region" description="Basic and acidic residues" evidence="5">
    <location>
        <begin position="551"/>
        <end position="562"/>
    </location>
</feature>
<feature type="compositionally biased region" description="Low complexity" evidence="5">
    <location>
        <begin position="626"/>
        <end position="644"/>
    </location>
</feature>
<feature type="active site" description="S-palmitoyl cysteine intermediate" evidence="4">
    <location>
        <position position="134"/>
    </location>
</feature>
<feature type="modified residue" description="Phosphoserine" evidence="11">
    <location>
        <position position="335"/>
    </location>
</feature>
<feature type="modified residue" description="Omega-N-methylarginine" evidence="12">
    <location>
        <position position="439"/>
    </location>
</feature>
<feature type="modified residue" description="Phosphoserine" evidence="2">
    <location>
        <position position="603"/>
    </location>
</feature>
<feature type="modified residue" description="Phosphoserine" evidence="11">
    <location>
        <position position="624"/>
    </location>
</feature>
<feature type="modified residue" description="Phosphoserine" evidence="10">
    <location>
        <position position="672"/>
    </location>
</feature>
<feature type="modified residue" description="Phosphoserine" evidence="2">
    <location>
        <position position="679"/>
    </location>
</feature>
<feature type="modified residue" description="Phosphoserine" evidence="2">
    <location>
        <position position="722"/>
    </location>
</feature>
<feature type="modified residue" description="Phosphoserine" evidence="2">
    <location>
        <position position="740"/>
    </location>
</feature>
<gene>
    <name evidence="9" type="primary">Zdhhc8</name>
</gene>
<proteinExistence type="evidence at protein level"/>
<accession>Q5Y5T5</accession>
<accession>Q7TNF7</accession>
<dbReference type="EC" id="2.3.1.225" evidence="2"/>
<dbReference type="EMBL" id="AY668947">
    <property type="protein sequence ID" value="AAU89701.1"/>
    <property type="molecule type" value="mRNA"/>
</dbReference>
<dbReference type="EMBL" id="BC055694">
    <property type="protein sequence ID" value="AAH55694.1"/>
    <property type="molecule type" value="mRNA"/>
</dbReference>
<dbReference type="CCDS" id="CCDS28017.1"/>
<dbReference type="RefSeq" id="NP_742163.4">
    <property type="nucleotide sequence ID" value="NM_172151.4"/>
</dbReference>
<dbReference type="SMR" id="Q5Y5T5"/>
<dbReference type="BioGRID" id="205544">
    <property type="interactions" value="2"/>
</dbReference>
<dbReference type="FunCoup" id="Q5Y5T5">
    <property type="interactions" value="897"/>
</dbReference>
<dbReference type="STRING" id="10090.ENSMUSP00000076224"/>
<dbReference type="GlyGen" id="Q5Y5T5">
    <property type="glycosylation" value="3 sites, 1 N-linked glycan (1 site), 1 O-linked glycan (1 site)"/>
</dbReference>
<dbReference type="iPTMnet" id="Q5Y5T5"/>
<dbReference type="PhosphoSitePlus" id="Q5Y5T5"/>
<dbReference type="SwissPalm" id="Q5Y5T5"/>
<dbReference type="jPOST" id="Q5Y5T5"/>
<dbReference type="PaxDb" id="10090-ENSMUSP00000076224"/>
<dbReference type="ProteomicsDB" id="302124"/>
<dbReference type="Pumba" id="Q5Y5T5"/>
<dbReference type="Antibodypedia" id="328">
    <property type="antibodies" value="151 antibodies from 28 providers"/>
</dbReference>
<dbReference type="DNASU" id="27801"/>
<dbReference type="Ensembl" id="ENSMUST00000076957.7">
    <property type="protein sequence ID" value="ENSMUSP00000076224.6"/>
    <property type="gene ID" value="ENSMUSG00000060166.7"/>
</dbReference>
<dbReference type="GeneID" id="27801"/>
<dbReference type="KEGG" id="mmu:27801"/>
<dbReference type="UCSC" id="uc007ymx.1">
    <property type="organism name" value="mouse"/>
</dbReference>
<dbReference type="AGR" id="MGI:1338012"/>
<dbReference type="CTD" id="29801"/>
<dbReference type="MGI" id="MGI:1338012">
    <property type="gene designation" value="Zdhhc8"/>
</dbReference>
<dbReference type="VEuPathDB" id="HostDB:ENSMUSG00000060166"/>
<dbReference type="eggNOG" id="KOG1311">
    <property type="taxonomic scope" value="Eukaryota"/>
</dbReference>
<dbReference type="GeneTree" id="ENSGT00940000158044"/>
<dbReference type="HOGENOM" id="CLU_013779_1_0_1"/>
<dbReference type="InParanoid" id="Q5Y5T5"/>
<dbReference type="OMA" id="RDCHLGA"/>
<dbReference type="OrthoDB" id="4096362at2759"/>
<dbReference type="PhylomeDB" id="Q5Y5T5"/>
<dbReference type="TreeFam" id="TF354263"/>
<dbReference type="Reactome" id="R-MMU-8963896">
    <property type="pathway name" value="HDL assembly"/>
</dbReference>
<dbReference type="BioGRID-ORCS" id="27801">
    <property type="hits" value="1 hit in 79 CRISPR screens"/>
</dbReference>
<dbReference type="CD-CODE" id="CE726F99">
    <property type="entry name" value="Postsynaptic density"/>
</dbReference>
<dbReference type="ChiTaRS" id="Zdhhc8">
    <property type="organism name" value="mouse"/>
</dbReference>
<dbReference type="PRO" id="PR:Q5Y5T5"/>
<dbReference type="Proteomes" id="UP000000589">
    <property type="component" value="Chromosome 16"/>
</dbReference>
<dbReference type="RNAct" id="Q5Y5T5">
    <property type="molecule type" value="protein"/>
</dbReference>
<dbReference type="Bgee" id="ENSMUSG00000060166">
    <property type="expression patterns" value="Expressed in primary visual cortex and 73 other cell types or tissues"/>
</dbReference>
<dbReference type="ExpressionAtlas" id="Q5Y5T5">
    <property type="expression patterns" value="baseline and differential"/>
</dbReference>
<dbReference type="GO" id="GO:0098978">
    <property type="term" value="C:glutamatergic synapse"/>
    <property type="evidence" value="ECO:0000314"/>
    <property type="project" value="SynGO"/>
</dbReference>
<dbReference type="GO" id="GO:0000139">
    <property type="term" value="C:Golgi membrane"/>
    <property type="evidence" value="ECO:0007669"/>
    <property type="project" value="UniProtKB-SubCell"/>
</dbReference>
<dbReference type="GO" id="GO:0031966">
    <property type="term" value="C:mitochondrial membrane"/>
    <property type="evidence" value="ECO:0007669"/>
    <property type="project" value="UniProtKB-SubCell"/>
</dbReference>
<dbReference type="GO" id="GO:0005739">
    <property type="term" value="C:mitochondrion"/>
    <property type="evidence" value="ECO:0000314"/>
    <property type="project" value="MGI"/>
</dbReference>
<dbReference type="GO" id="GO:0048471">
    <property type="term" value="C:perinuclear region of cytoplasm"/>
    <property type="evidence" value="ECO:0000266"/>
    <property type="project" value="MGI"/>
</dbReference>
<dbReference type="GO" id="GO:0098794">
    <property type="term" value="C:postsynapse"/>
    <property type="evidence" value="ECO:0000314"/>
    <property type="project" value="SynGO"/>
</dbReference>
<dbReference type="GO" id="GO:0016409">
    <property type="term" value="F:palmitoyltransferase activity"/>
    <property type="evidence" value="ECO:0000266"/>
    <property type="project" value="MGI"/>
</dbReference>
<dbReference type="GO" id="GO:0019706">
    <property type="term" value="F:protein-cysteine S-palmitoyltransferase activity"/>
    <property type="evidence" value="ECO:0007669"/>
    <property type="project" value="UniProtKB-EC"/>
</dbReference>
<dbReference type="GO" id="GO:0007626">
    <property type="term" value="P:locomotory behavior"/>
    <property type="evidence" value="ECO:0000315"/>
    <property type="project" value="MGI"/>
</dbReference>
<dbReference type="GO" id="GO:0018230">
    <property type="term" value="P:peptidyl-L-cysteine S-palmitoylation"/>
    <property type="evidence" value="ECO:0000250"/>
    <property type="project" value="UniProtKB"/>
</dbReference>
<dbReference type="GO" id="GO:0044794">
    <property type="term" value="P:positive regulation by host of viral process"/>
    <property type="evidence" value="ECO:0007669"/>
    <property type="project" value="Ensembl"/>
</dbReference>
<dbReference type="GO" id="GO:0010875">
    <property type="term" value="P:positive regulation of cholesterol efflux"/>
    <property type="evidence" value="ECO:0000250"/>
    <property type="project" value="UniProtKB"/>
</dbReference>
<dbReference type="GO" id="GO:0150052">
    <property type="term" value="P:regulation of postsynapse assembly"/>
    <property type="evidence" value="ECO:0000314"/>
    <property type="project" value="SynGO"/>
</dbReference>
<dbReference type="InterPro" id="IPR001594">
    <property type="entry name" value="Palmitoyltrfase_DHHC"/>
</dbReference>
<dbReference type="PANTHER" id="PTHR12349">
    <property type="entry name" value="ANKYRIN REPEAT AND LEM DOMAIN-CONTAINING PROTEIN 2"/>
    <property type="match status" value="1"/>
</dbReference>
<dbReference type="PANTHER" id="PTHR12349:SF1">
    <property type="entry name" value="PALMITOYLTRANSFERASE ZDHHC8"/>
    <property type="match status" value="1"/>
</dbReference>
<dbReference type="Pfam" id="PF01529">
    <property type="entry name" value="DHHC"/>
    <property type="match status" value="1"/>
</dbReference>
<dbReference type="PROSITE" id="PS50216">
    <property type="entry name" value="DHHC"/>
    <property type="match status" value="1"/>
</dbReference>
<organism>
    <name type="scientific">Mus musculus</name>
    <name type="common">Mouse</name>
    <dbReference type="NCBI Taxonomy" id="10090"/>
    <lineage>
        <taxon>Eukaryota</taxon>
        <taxon>Metazoa</taxon>
        <taxon>Chordata</taxon>
        <taxon>Craniata</taxon>
        <taxon>Vertebrata</taxon>
        <taxon>Euteleostomi</taxon>
        <taxon>Mammalia</taxon>
        <taxon>Eutheria</taxon>
        <taxon>Euarchontoglires</taxon>
        <taxon>Glires</taxon>
        <taxon>Rodentia</taxon>
        <taxon>Myomorpha</taxon>
        <taxon>Muroidea</taxon>
        <taxon>Muridae</taxon>
        <taxon>Murinae</taxon>
        <taxon>Mus</taxon>
        <taxon>Mus</taxon>
    </lineage>
</organism>
<comment type="function">
    <text evidence="2 6">Palmitoyltransferase that catalyzes the addition of palmitate onto various protein substrates and therefore functions in several unrelated biological processes. Through the palmitoylation of ABCA1 regulates the localization of the transporter to the plasma membrane and thereby regulates its function in cholesterol and phospholipid efflux (By similarity). Could also pamitoylate the D(2) dopamine receptor DRD2 and regulate its stability and localization to the plasma membrane (By similarity). Could also play a role in glutamatergic transmission (PubMed:15184899).</text>
</comment>
<comment type="catalytic activity">
    <reaction evidence="2">
        <text>L-cysteinyl-[protein] + hexadecanoyl-CoA = S-hexadecanoyl-L-cysteinyl-[protein] + CoA</text>
        <dbReference type="Rhea" id="RHEA:36683"/>
        <dbReference type="Rhea" id="RHEA-COMP:10131"/>
        <dbReference type="Rhea" id="RHEA-COMP:11032"/>
        <dbReference type="ChEBI" id="CHEBI:29950"/>
        <dbReference type="ChEBI" id="CHEBI:57287"/>
        <dbReference type="ChEBI" id="CHEBI:57379"/>
        <dbReference type="ChEBI" id="CHEBI:74151"/>
        <dbReference type="EC" id="2.3.1.225"/>
    </reaction>
    <physiologicalReaction direction="left-to-right" evidence="2">
        <dbReference type="Rhea" id="RHEA:36684"/>
    </physiologicalReaction>
</comment>
<comment type="subcellular location">
    <subcellularLocation>
        <location evidence="2">Golgi apparatus membrane</location>
        <topology evidence="3">Multi-pass membrane protein</topology>
    </subcellularLocation>
    <subcellularLocation>
        <location evidence="7">Mitochondrion membrane</location>
        <topology evidence="3">Multi-pass membrane protein</topology>
    </subcellularLocation>
</comment>
<comment type="tissue specificity">
    <text evidence="6">Expressed in brain cortex and hippocampus.</text>
</comment>
<comment type="domain">
    <text evidence="1">The DHHC domain is required for palmitoyltransferase activity.</text>
</comment>
<comment type="disruption phenotype">
    <text evidence="6">Mice have normal brain morphology, but female have strong locomotor deficits in open field, due to a greater fear of new environments.</text>
</comment>
<comment type="similarity">
    <text evidence="8">Belongs to the DHHC palmitoyltransferase family. ERF2/ZDHHC9 subfamily.</text>
</comment>
<protein>
    <recommendedName>
        <fullName evidence="8">Palmitoyltransferase ZDHHC8</fullName>
        <ecNumber evidence="2">2.3.1.225</ecNumber>
    </recommendedName>
    <alternativeName>
        <fullName evidence="9">Zinc finger DHHC domain-containing protein 8</fullName>
        <shortName evidence="2">DHHC-8</shortName>
    </alternativeName>
</protein>
<keyword id="KW-0012">Acyltransferase</keyword>
<keyword id="KW-0333">Golgi apparatus</keyword>
<keyword id="KW-0449">Lipoprotein</keyword>
<keyword id="KW-0472">Membrane</keyword>
<keyword id="KW-0488">Methylation</keyword>
<keyword id="KW-0496">Mitochondrion</keyword>
<keyword id="KW-0564">Palmitate</keyword>
<keyword id="KW-0597">Phosphoprotein</keyword>
<keyword id="KW-1185">Reference proteome</keyword>
<keyword id="KW-0808">Transferase</keyword>
<keyword id="KW-0812">Transmembrane</keyword>
<keyword id="KW-1133">Transmembrane helix</keyword>
<sequence>MPRSPGTRLKPAKYIPVATAAALLVGSSTLFFVFTCPWLTRAVSPAIPVYNGILFLFVLANFSMATFMDPGVFPRADEDEDKEDDFRAPLYKNVDVRGIQVRMKWCATCHFYRPPRCSHCSVCDNCVEDFDHHCPWVNNCIGRRNYRYFFLFLLSLSAHMVGVVAFGLLYVLNHSEGLGAAHTTITMAVMCVAGLFFIPVIGLTGFHVVLVTRGRTTNEQVTGKFRGGVNPFTRGCYGNVEHVLCSPLAPRYVVEPPRMPLSVSLKPPFLRPELLERAVPLKVKLSDNGLKAGRSKSKGSLDQLDEKPLDLGPPLPPKIEAGTFGRDLKTPRPGSAESALSVQRTSPPTPAMYKFRPAFSTGPKTPFCGPNEQVPGPDSLTLADDSTHSLDFVSEPSLDLPDHGPGGLRPPYPPSPPLNTTDAFSGALRSLSLKAASRRGGDHMTLQPLRSEGGPPTPHRSLFAPHALPNRNGSLSYDSLLNPGSPSGHACPTHPSVGIASYHSPYLHPGPSDPPRPPPRSFSPVLGPRPREPSPVRYDNLSRTIMASIQERKDREERERLLRSQTDSLFGDSGVYDTPSSYSLQQASVLTEGPRGSVLRYGSRDDLVAGPGFGGARNPALQTSLSSLSSSMSRAPRTSSSSLQADQANNNAPGPRPGSGSHRSPARQGLPSPPGTPRSPSYTGSKAVAFIHTDLPDRQPSLAMQRDHPQLKTPPSKLNGQSPGMARLGPAASPMGPNASPARHTLVKKVSGVGGTTYEISV</sequence>
<evidence type="ECO:0000250" key="1">
    <source>
        <dbReference type="UniProtKB" id="Q8IUH5"/>
    </source>
</evidence>
<evidence type="ECO:0000250" key="2">
    <source>
        <dbReference type="UniProtKB" id="Q9ULC8"/>
    </source>
</evidence>
<evidence type="ECO:0000255" key="3"/>
<evidence type="ECO:0000255" key="4">
    <source>
        <dbReference type="PROSITE-ProRule" id="PRU00067"/>
    </source>
</evidence>
<evidence type="ECO:0000256" key="5">
    <source>
        <dbReference type="SAM" id="MobiDB-lite"/>
    </source>
</evidence>
<evidence type="ECO:0000269" key="6">
    <source>
    </source>
</evidence>
<evidence type="ECO:0000269" key="7">
    <source>
    </source>
</evidence>
<evidence type="ECO:0000305" key="8"/>
<evidence type="ECO:0000312" key="9">
    <source>
        <dbReference type="MGI" id="MGI:1338012"/>
    </source>
</evidence>
<evidence type="ECO:0007744" key="10">
    <source>
    </source>
</evidence>
<evidence type="ECO:0007744" key="11">
    <source>
    </source>
</evidence>
<evidence type="ECO:0007744" key="12">
    <source>
    </source>
</evidence>
<reference key="1">
    <citation type="journal article" date="2004" name="Neuron">
        <title>Identification of PSD-95 palmitoylating enzymes.</title>
        <authorList>
            <person name="Fukata M."/>
            <person name="Fukata Y."/>
            <person name="Adesnik H."/>
            <person name="Nicoll R.A."/>
            <person name="Bredt D.S."/>
        </authorList>
    </citation>
    <scope>NUCLEOTIDE SEQUENCE [MRNA]</scope>
    <source>
        <strain>C57BL/6J</strain>
        <tissue>Brain</tissue>
    </source>
</reference>
<reference key="2">
    <citation type="journal article" date="2004" name="Genome Res.">
        <title>The status, quality, and expansion of the NIH full-length cDNA project: the Mammalian Gene Collection (MGC).</title>
        <authorList>
            <consortium name="The MGC Project Team"/>
        </authorList>
    </citation>
    <scope>NUCLEOTIDE SEQUENCE [LARGE SCALE MRNA] OF 527-762</scope>
    <source>
        <strain>C57BL/6J</strain>
        <tissue>Brain</tissue>
    </source>
</reference>
<reference key="3">
    <citation type="journal article" date="2004" name="Nat. Genet.">
        <title>Evidence that the gene encoding ZDHHC8 contributes to the risk of schizophrenia.</title>
        <authorList>
            <person name="Mukai J."/>
            <person name="Liu H."/>
            <person name="Burt R.A."/>
            <person name="Swor D.E."/>
            <person name="Lai W.-S."/>
            <person name="Karayiorgou M."/>
            <person name="Gogos J.A."/>
        </authorList>
    </citation>
    <scope>FUNCTION</scope>
    <scope>TISSUE SPECIFICITY</scope>
    <scope>DISRUPTION PHENOTYPE</scope>
</reference>
<reference key="4">
    <citation type="journal article" date="2006" name="Mol. Cell. Proteomics">
        <title>Comprehensive identification of phosphorylation sites in postsynaptic density preparations.</title>
        <authorList>
            <person name="Trinidad J.C."/>
            <person name="Specht C.G."/>
            <person name="Thalhammer A."/>
            <person name="Schoepfer R."/>
            <person name="Burlingame A.L."/>
        </authorList>
    </citation>
    <scope>PHOSPHORYLATION [LARGE SCALE ANALYSIS] AT SER-672</scope>
    <scope>IDENTIFICATION BY MASS SPECTROMETRY [LARGE SCALE ANALYSIS]</scope>
    <source>
        <tissue>Brain</tissue>
    </source>
</reference>
<reference key="5">
    <citation type="journal article" date="2008" name="Mol. Cell. Neurosci.">
        <title>Mitochondrial localization and function of a subset of 22q11 deletion syndrome candidate genes.</title>
        <authorList>
            <person name="Maynard T.M."/>
            <person name="Meechan D.W."/>
            <person name="Dudevoir M.L."/>
            <person name="Gopalakrishna D."/>
            <person name="Peters A.Z."/>
            <person name="Heindel C.C."/>
            <person name="Sugimoto T.J."/>
            <person name="Wu Y."/>
            <person name="Lieberman J.A."/>
            <person name="Lamantia A.S."/>
        </authorList>
    </citation>
    <scope>SUBCELLULAR LOCATION</scope>
</reference>
<reference key="6">
    <citation type="journal article" date="2010" name="Cell">
        <title>A tissue-specific atlas of mouse protein phosphorylation and expression.</title>
        <authorList>
            <person name="Huttlin E.L."/>
            <person name="Jedrychowski M.P."/>
            <person name="Elias J.E."/>
            <person name="Goswami T."/>
            <person name="Rad R."/>
            <person name="Beausoleil S.A."/>
            <person name="Villen J."/>
            <person name="Haas W."/>
            <person name="Sowa M.E."/>
            <person name="Gygi S.P."/>
        </authorList>
    </citation>
    <scope>PHOSPHORYLATION [LARGE SCALE ANALYSIS] AT SER-335 AND SER-624</scope>
    <scope>IDENTIFICATION BY MASS SPECTROMETRY [LARGE SCALE ANALYSIS]</scope>
    <source>
        <tissue>Brain</tissue>
        <tissue>Brown adipose tissue</tissue>
        <tissue>Heart</tissue>
        <tissue>Kidney</tissue>
        <tissue>Spleen</tissue>
    </source>
</reference>
<reference key="7">
    <citation type="journal article" date="2014" name="Mol. Cell. Proteomics">
        <title>Immunoaffinity enrichment and mass spectrometry analysis of protein methylation.</title>
        <authorList>
            <person name="Guo A."/>
            <person name="Gu H."/>
            <person name="Zhou J."/>
            <person name="Mulhern D."/>
            <person name="Wang Y."/>
            <person name="Lee K.A."/>
            <person name="Yang V."/>
            <person name="Aguiar M."/>
            <person name="Kornhauser J."/>
            <person name="Jia X."/>
            <person name="Ren J."/>
            <person name="Beausoleil S.A."/>
            <person name="Silva J.C."/>
            <person name="Vemulapalli V."/>
            <person name="Bedford M.T."/>
            <person name="Comb M.J."/>
        </authorList>
    </citation>
    <scope>METHYLATION [LARGE SCALE ANALYSIS] AT ARG-439</scope>
    <scope>IDENTIFICATION BY MASS SPECTROMETRY [LARGE SCALE ANALYSIS]</scope>
    <source>
        <tissue>Brain</tissue>
    </source>
</reference>